<keyword id="KW-0479">Metal-binding</keyword>
<keyword id="KW-0500">Molybdenum</keyword>
<keyword id="KW-0560">Oxidoreductase</keyword>
<keyword id="KW-0574">Periplasm</keyword>
<keyword id="KW-1185">Reference proteome</keyword>
<keyword id="KW-0732">Signal</keyword>
<evidence type="ECO:0000255" key="1">
    <source>
        <dbReference type="HAMAP-Rule" id="MF_01206"/>
    </source>
</evidence>
<sequence length="333" mass="37469">MHKHRKPTEADVTPESLFYQRRRVLKALGISAAALSLPLSAQADLLAWFKGSDKPKAPPGKPLTFSQPTDWKLDLPLTPEDKVTGYNNFYEFGLDKADPAANAGGLKTDGWTIKIDGDVAKPLTLDIDDLLKRFPLEERIYRFRCVEAWSMVIPWVGFELAKLIKFAEPTSNARYVAFQTLHDPEQMPGQKDRFMGGGLDYPYVEGLRMDEAMNPLALLAVGVYGKTLPPQNGAPIRLVTPWKYGFKNIKSIVHIRLTRERPPCTWNLAAPDEYGFYANVNPHVDHPRWSQATERVIGSGGLLNVERQPTLLFNGYAEQVASLYRGLNLRDNF</sequence>
<protein>
    <recommendedName>
        <fullName evidence="1">Protein-methionine-sulfoxide reductase catalytic subunit MsrP</fullName>
        <ecNumber evidence="1">1.8.5.-</ecNumber>
    </recommendedName>
</protein>
<name>MSRP_PECAS</name>
<accession>Q6DAI9</accession>
<feature type="signal peptide" description="Tat-type signal" evidence="1">
    <location>
        <begin position="1"/>
        <end position="43"/>
    </location>
</feature>
<feature type="chain" id="PRO_0000070687" description="Protein-methionine-sulfoxide reductase catalytic subunit MsrP" evidence="1">
    <location>
        <begin position="44"/>
        <end position="333"/>
    </location>
</feature>
<feature type="binding site" evidence="1">
    <location>
        <position position="87"/>
    </location>
    <ligand>
        <name>Mo-molybdopterin</name>
        <dbReference type="ChEBI" id="CHEBI:71302"/>
    </ligand>
</feature>
<feature type="binding site" evidence="1">
    <location>
        <begin position="90"/>
        <end position="91"/>
    </location>
    <ligand>
        <name>Mo-molybdopterin</name>
        <dbReference type="ChEBI" id="CHEBI:71302"/>
    </ligand>
</feature>
<feature type="binding site" evidence="1">
    <location>
        <position position="145"/>
    </location>
    <ligand>
        <name>Mo-molybdopterin</name>
        <dbReference type="ChEBI" id="CHEBI:71302"/>
    </ligand>
    <ligandPart>
        <name>Mo</name>
        <dbReference type="ChEBI" id="CHEBI:28685"/>
    </ligandPart>
</feature>
<feature type="binding site" evidence="1">
    <location>
        <position position="180"/>
    </location>
    <ligand>
        <name>Mo-molybdopterin</name>
        <dbReference type="ChEBI" id="CHEBI:71302"/>
    </ligand>
</feature>
<feature type="binding site" evidence="1">
    <location>
        <position position="232"/>
    </location>
    <ligand>
        <name>Mo-molybdopterin</name>
        <dbReference type="ChEBI" id="CHEBI:71302"/>
    </ligand>
</feature>
<feature type="binding site" evidence="1">
    <location>
        <position position="237"/>
    </location>
    <ligand>
        <name>Mo-molybdopterin</name>
        <dbReference type="ChEBI" id="CHEBI:71302"/>
    </ligand>
</feature>
<feature type="binding site" evidence="1">
    <location>
        <begin position="248"/>
        <end position="250"/>
    </location>
    <ligand>
        <name>Mo-molybdopterin</name>
        <dbReference type="ChEBI" id="CHEBI:71302"/>
    </ligand>
</feature>
<dbReference type="EC" id="1.8.5.-" evidence="1"/>
<dbReference type="EMBL" id="BX950851">
    <property type="protein sequence ID" value="CAG73184.1"/>
    <property type="molecule type" value="Genomic_DNA"/>
</dbReference>
<dbReference type="RefSeq" id="WP_011091899.1">
    <property type="nucleotide sequence ID" value="NC_004547.2"/>
</dbReference>
<dbReference type="SMR" id="Q6DAI9"/>
<dbReference type="STRING" id="218491.ECA0264"/>
<dbReference type="GeneID" id="57207137"/>
<dbReference type="KEGG" id="eca:ECA0264"/>
<dbReference type="PATRIC" id="fig|218491.5.peg.266"/>
<dbReference type="eggNOG" id="COG2041">
    <property type="taxonomic scope" value="Bacteria"/>
</dbReference>
<dbReference type="HOGENOM" id="CLU_045520_0_0_6"/>
<dbReference type="OrthoDB" id="9795587at2"/>
<dbReference type="Proteomes" id="UP000007966">
    <property type="component" value="Chromosome"/>
</dbReference>
<dbReference type="GO" id="GO:0042597">
    <property type="term" value="C:periplasmic space"/>
    <property type="evidence" value="ECO:0007669"/>
    <property type="project" value="UniProtKB-SubCell"/>
</dbReference>
<dbReference type="GO" id="GO:0046872">
    <property type="term" value="F:metal ion binding"/>
    <property type="evidence" value="ECO:0007669"/>
    <property type="project" value="UniProtKB-KW"/>
</dbReference>
<dbReference type="GO" id="GO:0043546">
    <property type="term" value="F:molybdopterin cofactor binding"/>
    <property type="evidence" value="ECO:0007669"/>
    <property type="project" value="UniProtKB-UniRule"/>
</dbReference>
<dbReference type="GO" id="GO:0016672">
    <property type="term" value="F:oxidoreductase activity, acting on a sulfur group of donors, quinone or similar compound as acceptor"/>
    <property type="evidence" value="ECO:0007669"/>
    <property type="project" value="UniProtKB-UniRule"/>
</dbReference>
<dbReference type="GO" id="GO:0030091">
    <property type="term" value="P:protein repair"/>
    <property type="evidence" value="ECO:0007669"/>
    <property type="project" value="UniProtKB-UniRule"/>
</dbReference>
<dbReference type="CDD" id="cd02107">
    <property type="entry name" value="YedY_like_Moco"/>
    <property type="match status" value="1"/>
</dbReference>
<dbReference type="Gene3D" id="3.90.420.10">
    <property type="entry name" value="Oxidoreductase, molybdopterin-binding domain"/>
    <property type="match status" value="1"/>
</dbReference>
<dbReference type="HAMAP" id="MF_01206">
    <property type="entry name" value="MsrP"/>
    <property type="match status" value="1"/>
</dbReference>
<dbReference type="InterPro" id="IPR022867">
    <property type="entry name" value="MsrP"/>
</dbReference>
<dbReference type="InterPro" id="IPR000572">
    <property type="entry name" value="OxRdtase_Mopterin-bd_dom"/>
</dbReference>
<dbReference type="InterPro" id="IPR036374">
    <property type="entry name" value="OxRdtase_Mopterin-bd_sf"/>
</dbReference>
<dbReference type="InterPro" id="IPR006311">
    <property type="entry name" value="TAT_signal"/>
</dbReference>
<dbReference type="NCBIfam" id="NF003767">
    <property type="entry name" value="PRK05363.1"/>
    <property type="match status" value="1"/>
</dbReference>
<dbReference type="PANTHER" id="PTHR43032">
    <property type="entry name" value="PROTEIN-METHIONINE-SULFOXIDE REDUCTASE"/>
    <property type="match status" value="1"/>
</dbReference>
<dbReference type="PANTHER" id="PTHR43032:SF3">
    <property type="entry name" value="PROTEIN-METHIONINE-SULFOXIDE REDUCTASE CATALYTIC SUBUNIT MSRP"/>
    <property type="match status" value="1"/>
</dbReference>
<dbReference type="Pfam" id="PF00174">
    <property type="entry name" value="Oxidored_molyb"/>
    <property type="match status" value="1"/>
</dbReference>
<dbReference type="SUPFAM" id="SSF56524">
    <property type="entry name" value="Oxidoreductase molybdopterin-binding domain"/>
    <property type="match status" value="1"/>
</dbReference>
<dbReference type="PROSITE" id="PS51318">
    <property type="entry name" value="TAT"/>
    <property type="match status" value="1"/>
</dbReference>
<gene>
    <name evidence="1" type="primary">msrP</name>
    <name type="ordered locus">ECA0264</name>
</gene>
<proteinExistence type="inferred from homology"/>
<comment type="function">
    <text evidence="1">Part of the MsrPQ system that repairs oxidized periplasmic proteins containing methionine sulfoxide residues (Met-O), using respiratory chain electrons. Thus protects these proteins from oxidative-stress damage caused by reactive species of oxygen and chlorine generated by the host defense mechanisms. MsrPQ is essential for the maintenance of envelope integrity under bleach stress, rescuing a wide series of structurally unrelated periplasmic proteins from methionine oxidation. The catalytic subunit MsrP is non-stereospecific, being able to reduce both (R-) and (S-) diastereoisomers of methionine sulfoxide.</text>
</comment>
<comment type="catalytic activity">
    <reaction evidence="1">
        <text>L-methionyl-[protein] + a quinone + H2O = L-methionyl-(S)-S-oxide-[protein] + a quinol</text>
        <dbReference type="Rhea" id="RHEA:51292"/>
        <dbReference type="Rhea" id="RHEA-COMP:12313"/>
        <dbReference type="Rhea" id="RHEA-COMP:12315"/>
        <dbReference type="ChEBI" id="CHEBI:15377"/>
        <dbReference type="ChEBI" id="CHEBI:16044"/>
        <dbReference type="ChEBI" id="CHEBI:24646"/>
        <dbReference type="ChEBI" id="CHEBI:44120"/>
        <dbReference type="ChEBI" id="CHEBI:132124"/>
    </reaction>
</comment>
<comment type="catalytic activity">
    <reaction evidence="1">
        <text>L-methionyl-[protein] + a quinone + H2O = L-methionyl-(R)-S-oxide-[protein] + a quinol</text>
        <dbReference type="Rhea" id="RHEA:51296"/>
        <dbReference type="Rhea" id="RHEA-COMP:12313"/>
        <dbReference type="Rhea" id="RHEA-COMP:12314"/>
        <dbReference type="ChEBI" id="CHEBI:15377"/>
        <dbReference type="ChEBI" id="CHEBI:16044"/>
        <dbReference type="ChEBI" id="CHEBI:24646"/>
        <dbReference type="ChEBI" id="CHEBI:45764"/>
        <dbReference type="ChEBI" id="CHEBI:132124"/>
    </reaction>
</comment>
<comment type="cofactor">
    <cofactor evidence="1">
        <name>Mo-molybdopterin</name>
        <dbReference type="ChEBI" id="CHEBI:71302"/>
    </cofactor>
    <text evidence="1">Binds 1 Mo-molybdopterin (Mo-MPT) cofactor per subunit.</text>
</comment>
<comment type="subunit">
    <text evidence="1">Heterodimer of a catalytic subunit (MsrP) and a heme-binding subunit (MsrQ).</text>
</comment>
<comment type="subcellular location">
    <subcellularLocation>
        <location evidence="1">Periplasm</location>
    </subcellularLocation>
    <text evidence="1">Is attached to the inner membrane when interacting with the MsrQ subunit.</text>
</comment>
<comment type="PTM">
    <text evidence="1">Predicted to be exported by the Tat system. The position of the signal peptide cleavage has not been experimentally proven.</text>
</comment>
<comment type="similarity">
    <text evidence="1">Belongs to the MsrP family.</text>
</comment>
<organism>
    <name type="scientific">Pectobacterium atrosepticum (strain SCRI 1043 / ATCC BAA-672)</name>
    <name type="common">Erwinia carotovora subsp. atroseptica</name>
    <dbReference type="NCBI Taxonomy" id="218491"/>
    <lineage>
        <taxon>Bacteria</taxon>
        <taxon>Pseudomonadati</taxon>
        <taxon>Pseudomonadota</taxon>
        <taxon>Gammaproteobacteria</taxon>
        <taxon>Enterobacterales</taxon>
        <taxon>Pectobacteriaceae</taxon>
        <taxon>Pectobacterium</taxon>
    </lineage>
</organism>
<reference key="1">
    <citation type="journal article" date="2004" name="Proc. Natl. Acad. Sci. U.S.A.">
        <title>Genome sequence of the enterobacterial phytopathogen Erwinia carotovora subsp. atroseptica and characterization of virulence factors.</title>
        <authorList>
            <person name="Bell K.S."/>
            <person name="Sebaihia M."/>
            <person name="Pritchard L."/>
            <person name="Holden M.T.G."/>
            <person name="Hyman L.J."/>
            <person name="Holeva M.C."/>
            <person name="Thomson N.R."/>
            <person name="Bentley S.D."/>
            <person name="Churcher L.J.C."/>
            <person name="Mungall K."/>
            <person name="Atkin R."/>
            <person name="Bason N."/>
            <person name="Brooks K."/>
            <person name="Chillingworth T."/>
            <person name="Clark K."/>
            <person name="Doggett J."/>
            <person name="Fraser A."/>
            <person name="Hance Z."/>
            <person name="Hauser H."/>
            <person name="Jagels K."/>
            <person name="Moule S."/>
            <person name="Norbertczak H."/>
            <person name="Ormond D."/>
            <person name="Price C."/>
            <person name="Quail M.A."/>
            <person name="Sanders M."/>
            <person name="Walker D."/>
            <person name="Whitehead S."/>
            <person name="Salmond G.P.C."/>
            <person name="Birch P.R.J."/>
            <person name="Parkhill J."/>
            <person name="Toth I.K."/>
        </authorList>
    </citation>
    <scope>NUCLEOTIDE SEQUENCE [LARGE SCALE GENOMIC DNA]</scope>
    <source>
        <strain>SCRI 1043 / ATCC BAA-672</strain>
    </source>
</reference>